<comment type="function">
    <text evidence="1">Catalyzes the initial step of the lipid cycle reactions in the biosynthesis of the cell wall peptidoglycan: transfers peptidoglycan precursor phospho-MurNAc-pentapeptide from UDP-MurNAc-pentapeptide onto the lipid carrier undecaprenyl phosphate, yielding undecaprenyl-pyrophosphoryl-MurNAc-pentapeptide, known as lipid I.</text>
</comment>
<comment type="catalytic activity">
    <reaction evidence="1">
        <text>UDP-N-acetyl-alpha-D-muramoyl-L-alanyl-gamma-D-glutamyl-meso-2,6-diaminopimeloyl-D-alanyl-D-alanine + di-trans,octa-cis-undecaprenyl phosphate = di-trans,octa-cis-undecaprenyl diphospho-N-acetyl-alpha-D-muramoyl-L-alanyl-D-glutamyl-meso-2,6-diaminopimeloyl-D-alanyl-D-alanine + UMP</text>
        <dbReference type="Rhea" id="RHEA:28386"/>
        <dbReference type="ChEBI" id="CHEBI:57865"/>
        <dbReference type="ChEBI" id="CHEBI:60392"/>
        <dbReference type="ChEBI" id="CHEBI:61386"/>
        <dbReference type="ChEBI" id="CHEBI:61387"/>
        <dbReference type="EC" id="2.7.8.13"/>
    </reaction>
</comment>
<comment type="cofactor">
    <cofactor evidence="1">
        <name>Mg(2+)</name>
        <dbReference type="ChEBI" id="CHEBI:18420"/>
    </cofactor>
</comment>
<comment type="pathway">
    <text evidence="1">Cell wall biogenesis; peptidoglycan biosynthesis.</text>
</comment>
<comment type="subcellular location">
    <subcellularLocation>
        <location evidence="1">Cell inner membrane</location>
        <topology evidence="1">Multi-pass membrane protein</topology>
    </subcellularLocation>
</comment>
<comment type="similarity">
    <text evidence="1">Belongs to the glycosyltransferase 4 family. MraY subfamily.</text>
</comment>
<reference key="1">
    <citation type="journal article" date="2009" name="J. Bacteriol.">
        <title>Genome sequences of three Agrobacterium biovars help elucidate the evolution of multichromosome genomes in bacteria.</title>
        <authorList>
            <person name="Slater S.C."/>
            <person name="Goldman B.S."/>
            <person name="Goodner B."/>
            <person name="Setubal J.C."/>
            <person name="Farrand S.K."/>
            <person name="Nester E.W."/>
            <person name="Burr T.J."/>
            <person name="Banta L."/>
            <person name="Dickerman A.W."/>
            <person name="Paulsen I."/>
            <person name="Otten L."/>
            <person name="Suen G."/>
            <person name="Welch R."/>
            <person name="Almeida N.F."/>
            <person name="Arnold F."/>
            <person name="Burton O.T."/>
            <person name="Du Z."/>
            <person name="Ewing A."/>
            <person name="Godsy E."/>
            <person name="Heisel S."/>
            <person name="Houmiel K.L."/>
            <person name="Jhaveri J."/>
            <person name="Lu J."/>
            <person name="Miller N.M."/>
            <person name="Norton S."/>
            <person name="Chen Q."/>
            <person name="Phoolcharoen W."/>
            <person name="Ohlin V."/>
            <person name="Ondrusek D."/>
            <person name="Pride N."/>
            <person name="Stricklin S.L."/>
            <person name="Sun J."/>
            <person name="Wheeler C."/>
            <person name="Wilson L."/>
            <person name="Zhu H."/>
            <person name="Wood D.W."/>
        </authorList>
    </citation>
    <scope>NUCLEOTIDE SEQUENCE [LARGE SCALE GENOMIC DNA]</scope>
    <source>
        <strain>ATCC BAA-846 / DSM 112012 / S4</strain>
    </source>
</reference>
<evidence type="ECO:0000255" key="1">
    <source>
        <dbReference type="HAMAP-Rule" id="MF_00038"/>
    </source>
</evidence>
<sequence>MLIWLVELANHVQFFNLFRYITFRTGAAMFTAALIVFLFGPKIIASLKVRQGKGQPIRADGPQTHFKKSGTPTMGGLMILAGIVGSSLLWADLSNVYVVATLLVTLGFGAIGFYDDYLKVTKQSDKGFSGKARLAIEFLIAGIAVFFMMEAAKISAPQGPHLATSIAFPFFKDALLNVGYFFIVFGGFVIVSAGNAVNLTDGLDGLAIVPVMIASAAFGLIAYLAGNAVFSGYLQINFVPGTGELAVILGSVIGAGLGFLWFNAPPAAIFMGDTGSLALGGLIGTVAVATKHEIVMVIIGGLFVMETLSVIIQVFWYKRTKKRVFLMAPIHHHFEKKGWTESQVVIRFWIIAVGLAMLGLATLKLR</sequence>
<gene>
    <name evidence="1" type="primary">mraY</name>
    <name type="ordered locus">Avi_2894</name>
</gene>
<keyword id="KW-0131">Cell cycle</keyword>
<keyword id="KW-0132">Cell division</keyword>
<keyword id="KW-0997">Cell inner membrane</keyword>
<keyword id="KW-1003">Cell membrane</keyword>
<keyword id="KW-0133">Cell shape</keyword>
<keyword id="KW-0961">Cell wall biogenesis/degradation</keyword>
<keyword id="KW-0460">Magnesium</keyword>
<keyword id="KW-0472">Membrane</keyword>
<keyword id="KW-0479">Metal-binding</keyword>
<keyword id="KW-0573">Peptidoglycan synthesis</keyword>
<keyword id="KW-1185">Reference proteome</keyword>
<keyword id="KW-0808">Transferase</keyword>
<keyword id="KW-0812">Transmembrane</keyword>
<keyword id="KW-1133">Transmembrane helix</keyword>
<accession>B9JY57</accession>
<feature type="chain" id="PRO_1000117155" description="Phospho-N-acetylmuramoyl-pentapeptide-transferase">
    <location>
        <begin position="1"/>
        <end position="366"/>
    </location>
</feature>
<feature type="transmembrane region" description="Helical" evidence="1">
    <location>
        <begin position="27"/>
        <end position="47"/>
    </location>
</feature>
<feature type="transmembrane region" description="Helical" evidence="1">
    <location>
        <begin position="71"/>
        <end position="91"/>
    </location>
</feature>
<feature type="transmembrane region" description="Helical" evidence="1">
    <location>
        <begin position="93"/>
        <end position="113"/>
    </location>
</feature>
<feature type="transmembrane region" description="Helical" evidence="1">
    <location>
        <begin position="134"/>
        <end position="154"/>
    </location>
</feature>
<feature type="transmembrane region" description="Helical" evidence="1">
    <location>
        <begin position="174"/>
        <end position="194"/>
    </location>
</feature>
<feature type="transmembrane region" description="Helical" evidence="1">
    <location>
        <begin position="205"/>
        <end position="225"/>
    </location>
</feature>
<feature type="transmembrane region" description="Helical" evidence="1">
    <location>
        <begin position="245"/>
        <end position="265"/>
    </location>
</feature>
<feature type="transmembrane region" description="Helical" evidence="1">
    <location>
        <begin position="268"/>
        <end position="288"/>
    </location>
</feature>
<feature type="transmembrane region" description="Helical" evidence="1">
    <location>
        <begin position="294"/>
        <end position="314"/>
    </location>
</feature>
<feature type="transmembrane region" description="Helical" evidence="1">
    <location>
        <begin position="343"/>
        <end position="363"/>
    </location>
</feature>
<proteinExistence type="inferred from homology"/>
<dbReference type="EC" id="2.7.8.13" evidence="1"/>
<dbReference type="EMBL" id="CP000633">
    <property type="protein sequence ID" value="ACM37087.1"/>
    <property type="molecule type" value="Genomic_DNA"/>
</dbReference>
<dbReference type="RefSeq" id="WP_015916508.1">
    <property type="nucleotide sequence ID" value="NC_011989.1"/>
</dbReference>
<dbReference type="SMR" id="B9JY57"/>
<dbReference type="STRING" id="311402.Avi_2894"/>
<dbReference type="KEGG" id="avi:Avi_2894"/>
<dbReference type="eggNOG" id="COG0472">
    <property type="taxonomic scope" value="Bacteria"/>
</dbReference>
<dbReference type="HOGENOM" id="CLU_023982_0_0_5"/>
<dbReference type="UniPathway" id="UPA00219"/>
<dbReference type="Proteomes" id="UP000001596">
    <property type="component" value="Chromosome 1"/>
</dbReference>
<dbReference type="GO" id="GO:0005886">
    <property type="term" value="C:plasma membrane"/>
    <property type="evidence" value="ECO:0007669"/>
    <property type="project" value="UniProtKB-SubCell"/>
</dbReference>
<dbReference type="GO" id="GO:0046872">
    <property type="term" value="F:metal ion binding"/>
    <property type="evidence" value="ECO:0007669"/>
    <property type="project" value="UniProtKB-KW"/>
</dbReference>
<dbReference type="GO" id="GO:0008963">
    <property type="term" value="F:phospho-N-acetylmuramoyl-pentapeptide-transferase activity"/>
    <property type="evidence" value="ECO:0007669"/>
    <property type="project" value="UniProtKB-UniRule"/>
</dbReference>
<dbReference type="GO" id="GO:0051992">
    <property type="term" value="F:UDP-N-acetylmuramoyl-L-alanyl-D-glutamyl-meso-2,6-diaminopimelyl-D-alanyl-D-alanine:undecaprenyl-phosphate transferase activity"/>
    <property type="evidence" value="ECO:0007669"/>
    <property type="project" value="RHEA"/>
</dbReference>
<dbReference type="GO" id="GO:0051301">
    <property type="term" value="P:cell division"/>
    <property type="evidence" value="ECO:0007669"/>
    <property type="project" value="UniProtKB-KW"/>
</dbReference>
<dbReference type="GO" id="GO:0071555">
    <property type="term" value="P:cell wall organization"/>
    <property type="evidence" value="ECO:0007669"/>
    <property type="project" value="UniProtKB-KW"/>
</dbReference>
<dbReference type="GO" id="GO:0009252">
    <property type="term" value="P:peptidoglycan biosynthetic process"/>
    <property type="evidence" value="ECO:0007669"/>
    <property type="project" value="UniProtKB-UniRule"/>
</dbReference>
<dbReference type="GO" id="GO:0008360">
    <property type="term" value="P:regulation of cell shape"/>
    <property type="evidence" value="ECO:0007669"/>
    <property type="project" value="UniProtKB-KW"/>
</dbReference>
<dbReference type="CDD" id="cd06852">
    <property type="entry name" value="GT_MraY"/>
    <property type="match status" value="1"/>
</dbReference>
<dbReference type="HAMAP" id="MF_00038">
    <property type="entry name" value="MraY"/>
    <property type="match status" value="1"/>
</dbReference>
<dbReference type="InterPro" id="IPR000715">
    <property type="entry name" value="Glycosyl_transferase_4"/>
</dbReference>
<dbReference type="InterPro" id="IPR003524">
    <property type="entry name" value="PNAcMuramoyl-5peptid_Trfase"/>
</dbReference>
<dbReference type="InterPro" id="IPR018480">
    <property type="entry name" value="PNAcMuramoyl-5peptid_Trfase_CS"/>
</dbReference>
<dbReference type="NCBIfam" id="TIGR00445">
    <property type="entry name" value="mraY"/>
    <property type="match status" value="1"/>
</dbReference>
<dbReference type="PANTHER" id="PTHR22926">
    <property type="entry name" value="PHOSPHO-N-ACETYLMURAMOYL-PENTAPEPTIDE-TRANSFERASE"/>
    <property type="match status" value="1"/>
</dbReference>
<dbReference type="PANTHER" id="PTHR22926:SF5">
    <property type="entry name" value="PHOSPHO-N-ACETYLMURAMOYL-PENTAPEPTIDE-TRANSFERASE HOMOLOG"/>
    <property type="match status" value="1"/>
</dbReference>
<dbReference type="Pfam" id="PF00953">
    <property type="entry name" value="Glycos_transf_4"/>
    <property type="match status" value="1"/>
</dbReference>
<dbReference type="Pfam" id="PF10555">
    <property type="entry name" value="MraY_sig1"/>
    <property type="match status" value="1"/>
</dbReference>
<dbReference type="PROSITE" id="PS01347">
    <property type="entry name" value="MRAY_1"/>
    <property type="match status" value="1"/>
</dbReference>
<dbReference type="PROSITE" id="PS01348">
    <property type="entry name" value="MRAY_2"/>
    <property type="match status" value="1"/>
</dbReference>
<name>MRAY_ALLAM</name>
<organism>
    <name type="scientific">Allorhizobium ampelinum (strain ATCC BAA-846 / DSM 112012 / S4)</name>
    <name type="common">Agrobacterium vitis (strain S4)</name>
    <dbReference type="NCBI Taxonomy" id="311402"/>
    <lineage>
        <taxon>Bacteria</taxon>
        <taxon>Pseudomonadati</taxon>
        <taxon>Pseudomonadota</taxon>
        <taxon>Alphaproteobacteria</taxon>
        <taxon>Hyphomicrobiales</taxon>
        <taxon>Rhizobiaceae</taxon>
        <taxon>Rhizobium/Agrobacterium group</taxon>
        <taxon>Allorhizobium</taxon>
        <taxon>Allorhizobium ampelinum</taxon>
    </lineage>
</organism>
<protein>
    <recommendedName>
        <fullName evidence="1">Phospho-N-acetylmuramoyl-pentapeptide-transferase</fullName>
        <ecNumber evidence="1">2.7.8.13</ecNumber>
    </recommendedName>
    <alternativeName>
        <fullName evidence="1">UDP-MurNAc-pentapeptide phosphotransferase</fullName>
    </alternativeName>
</protein>